<protein>
    <recommendedName>
        <fullName evidence="1">Acetylglutamate kinase</fullName>
        <ecNumber evidence="1">2.7.2.8</ecNumber>
    </recommendedName>
    <alternativeName>
        <fullName evidence="1">N-acetyl-L-glutamate 5-phosphotransferase</fullName>
    </alternativeName>
    <alternativeName>
        <fullName evidence="1">NAG kinase</fullName>
        <shortName evidence="1">NAGK</shortName>
    </alternativeName>
</protein>
<organism>
    <name type="scientific">Chloroflexus aurantiacus (strain ATCC 29366 / DSM 635 / J-10-fl)</name>
    <dbReference type="NCBI Taxonomy" id="324602"/>
    <lineage>
        <taxon>Bacteria</taxon>
        <taxon>Bacillati</taxon>
        <taxon>Chloroflexota</taxon>
        <taxon>Chloroflexia</taxon>
        <taxon>Chloroflexales</taxon>
        <taxon>Chloroflexineae</taxon>
        <taxon>Chloroflexaceae</taxon>
        <taxon>Chloroflexus</taxon>
    </lineage>
</organism>
<accession>A9WKG4</accession>
<evidence type="ECO:0000255" key="1">
    <source>
        <dbReference type="HAMAP-Rule" id="MF_00082"/>
    </source>
</evidence>
<feature type="chain" id="PRO_0000335618" description="Acetylglutamate kinase">
    <location>
        <begin position="1"/>
        <end position="254"/>
    </location>
</feature>
<feature type="binding site" evidence="1">
    <location>
        <begin position="40"/>
        <end position="41"/>
    </location>
    <ligand>
        <name>substrate</name>
    </ligand>
</feature>
<feature type="binding site" evidence="1">
    <location>
        <position position="62"/>
    </location>
    <ligand>
        <name>substrate</name>
    </ligand>
</feature>
<feature type="binding site" evidence="1">
    <location>
        <position position="158"/>
    </location>
    <ligand>
        <name>substrate</name>
    </ligand>
</feature>
<feature type="site" description="Transition state stabilizer" evidence="1">
    <location>
        <position position="8"/>
    </location>
</feature>
<feature type="site" description="Transition state stabilizer" evidence="1">
    <location>
        <position position="217"/>
    </location>
</feature>
<reference key="1">
    <citation type="journal article" date="2011" name="BMC Genomics">
        <title>Complete genome sequence of the filamentous anoxygenic phototrophic bacterium Chloroflexus aurantiacus.</title>
        <authorList>
            <person name="Tang K.H."/>
            <person name="Barry K."/>
            <person name="Chertkov O."/>
            <person name="Dalin E."/>
            <person name="Han C.S."/>
            <person name="Hauser L.J."/>
            <person name="Honchak B.M."/>
            <person name="Karbach L.E."/>
            <person name="Land M.L."/>
            <person name="Lapidus A."/>
            <person name="Larimer F.W."/>
            <person name="Mikhailova N."/>
            <person name="Pitluck S."/>
            <person name="Pierson B.K."/>
            <person name="Blankenship R.E."/>
        </authorList>
    </citation>
    <scope>NUCLEOTIDE SEQUENCE [LARGE SCALE GENOMIC DNA]</scope>
    <source>
        <strain>ATCC 29366 / DSM 635 / J-10-fl</strain>
    </source>
</reference>
<proteinExistence type="inferred from homology"/>
<keyword id="KW-0028">Amino-acid biosynthesis</keyword>
<keyword id="KW-0055">Arginine biosynthesis</keyword>
<keyword id="KW-0067">ATP-binding</keyword>
<keyword id="KW-0963">Cytoplasm</keyword>
<keyword id="KW-0418">Kinase</keyword>
<keyword id="KW-0547">Nucleotide-binding</keyword>
<keyword id="KW-1185">Reference proteome</keyword>
<keyword id="KW-0808">Transferase</keyword>
<gene>
    <name evidence="1" type="primary">argB</name>
    <name type="ordered locus">Caur_3407</name>
</gene>
<sequence length="254" mass="25905">MTTISVIKVSGHELDDPTFLGGLTAALRGFQQPLVLVHGGGKEISAAVERAGLQIEFVDGLRVTSPAVMDIMQMVVCGTINKRIVTALVNAGVKAIGLSGLDLGLLRCEPYRPAGRDLGRVGEVTAVDGAALLHLLALGWMPVIAPVALGATDGLSYNVNADMVAEAVAGALAGAELVFVSNVPGVLVDGRVVPALTPAAVEELIANGVISGGMIPKVRAALAALQRGASSVRIVNLAGLHDGGTRFTHGELSE</sequence>
<comment type="function">
    <text evidence="1">Catalyzes the ATP-dependent phosphorylation of N-acetyl-L-glutamate.</text>
</comment>
<comment type="catalytic activity">
    <reaction evidence="1">
        <text>N-acetyl-L-glutamate + ATP = N-acetyl-L-glutamyl 5-phosphate + ADP</text>
        <dbReference type="Rhea" id="RHEA:14629"/>
        <dbReference type="ChEBI" id="CHEBI:30616"/>
        <dbReference type="ChEBI" id="CHEBI:44337"/>
        <dbReference type="ChEBI" id="CHEBI:57936"/>
        <dbReference type="ChEBI" id="CHEBI:456216"/>
        <dbReference type="EC" id="2.7.2.8"/>
    </reaction>
</comment>
<comment type="pathway">
    <text evidence="1">Amino-acid biosynthesis; L-arginine biosynthesis; N(2)-acetyl-L-ornithine from L-glutamate: step 2/4.</text>
</comment>
<comment type="subcellular location">
    <subcellularLocation>
        <location evidence="1">Cytoplasm</location>
    </subcellularLocation>
</comment>
<comment type="similarity">
    <text evidence="1">Belongs to the acetylglutamate kinase family. ArgB subfamily.</text>
</comment>
<name>ARGB_CHLAA</name>
<dbReference type="EC" id="2.7.2.8" evidence="1"/>
<dbReference type="EMBL" id="CP000909">
    <property type="protein sequence ID" value="ABY36592.1"/>
    <property type="molecule type" value="Genomic_DNA"/>
</dbReference>
<dbReference type="RefSeq" id="WP_012259245.1">
    <property type="nucleotide sequence ID" value="NC_010175.1"/>
</dbReference>
<dbReference type="RefSeq" id="YP_001636981.1">
    <property type="nucleotide sequence ID" value="NC_010175.1"/>
</dbReference>
<dbReference type="SMR" id="A9WKG4"/>
<dbReference type="FunCoup" id="A9WKG4">
    <property type="interactions" value="445"/>
</dbReference>
<dbReference type="STRING" id="324602.Caur_3407"/>
<dbReference type="EnsemblBacteria" id="ABY36592">
    <property type="protein sequence ID" value="ABY36592"/>
    <property type="gene ID" value="Caur_3407"/>
</dbReference>
<dbReference type="KEGG" id="cau:Caur_3407"/>
<dbReference type="PATRIC" id="fig|324602.8.peg.3835"/>
<dbReference type="eggNOG" id="COG0548">
    <property type="taxonomic scope" value="Bacteria"/>
</dbReference>
<dbReference type="HOGENOM" id="CLU_053680_1_0_0"/>
<dbReference type="InParanoid" id="A9WKG4"/>
<dbReference type="UniPathway" id="UPA00068">
    <property type="reaction ID" value="UER00107"/>
</dbReference>
<dbReference type="Proteomes" id="UP000002008">
    <property type="component" value="Chromosome"/>
</dbReference>
<dbReference type="GO" id="GO:0005737">
    <property type="term" value="C:cytoplasm"/>
    <property type="evidence" value="ECO:0007669"/>
    <property type="project" value="UniProtKB-SubCell"/>
</dbReference>
<dbReference type="GO" id="GO:0003991">
    <property type="term" value="F:acetylglutamate kinase activity"/>
    <property type="evidence" value="ECO:0000318"/>
    <property type="project" value="GO_Central"/>
</dbReference>
<dbReference type="GO" id="GO:0005524">
    <property type="term" value="F:ATP binding"/>
    <property type="evidence" value="ECO:0007669"/>
    <property type="project" value="UniProtKB-UniRule"/>
</dbReference>
<dbReference type="GO" id="GO:0042450">
    <property type="term" value="P:arginine biosynthetic process via ornithine"/>
    <property type="evidence" value="ECO:0007669"/>
    <property type="project" value="UniProtKB-UniRule"/>
</dbReference>
<dbReference type="GO" id="GO:0006526">
    <property type="term" value="P:L-arginine biosynthetic process"/>
    <property type="evidence" value="ECO:0000318"/>
    <property type="project" value="GO_Central"/>
</dbReference>
<dbReference type="CDD" id="cd04238">
    <property type="entry name" value="AAK_NAGK-like"/>
    <property type="match status" value="1"/>
</dbReference>
<dbReference type="Gene3D" id="3.40.1160.10">
    <property type="entry name" value="Acetylglutamate kinase-like"/>
    <property type="match status" value="1"/>
</dbReference>
<dbReference type="HAMAP" id="MF_00082">
    <property type="entry name" value="ArgB"/>
    <property type="match status" value="1"/>
</dbReference>
<dbReference type="InterPro" id="IPR036393">
    <property type="entry name" value="AceGlu_kinase-like_sf"/>
</dbReference>
<dbReference type="InterPro" id="IPR004662">
    <property type="entry name" value="AcgluKinase_fam"/>
</dbReference>
<dbReference type="InterPro" id="IPR037528">
    <property type="entry name" value="ArgB"/>
</dbReference>
<dbReference type="InterPro" id="IPR001048">
    <property type="entry name" value="Asp/Glu/Uridylate_kinase"/>
</dbReference>
<dbReference type="NCBIfam" id="TIGR00761">
    <property type="entry name" value="argB"/>
    <property type="match status" value="1"/>
</dbReference>
<dbReference type="PANTHER" id="PTHR23342">
    <property type="entry name" value="N-ACETYLGLUTAMATE SYNTHASE"/>
    <property type="match status" value="1"/>
</dbReference>
<dbReference type="PANTHER" id="PTHR23342:SF0">
    <property type="entry name" value="N-ACETYLGLUTAMATE SYNTHASE, MITOCHONDRIAL"/>
    <property type="match status" value="1"/>
</dbReference>
<dbReference type="Pfam" id="PF00696">
    <property type="entry name" value="AA_kinase"/>
    <property type="match status" value="1"/>
</dbReference>
<dbReference type="PIRSF" id="PIRSF000728">
    <property type="entry name" value="NAGK"/>
    <property type="match status" value="1"/>
</dbReference>
<dbReference type="SUPFAM" id="SSF53633">
    <property type="entry name" value="Carbamate kinase-like"/>
    <property type="match status" value="1"/>
</dbReference>